<feature type="chain" id="PRO_0000209440" description="Co-chaperone protein DjlA">
    <location>
        <begin position="1"/>
        <end position="284"/>
    </location>
</feature>
<feature type="topological domain" description="Periplasmic" evidence="1">
    <location>
        <begin position="1"/>
        <end position="6"/>
    </location>
</feature>
<feature type="transmembrane region" description="Helical" evidence="1">
    <location>
        <begin position="7"/>
        <end position="30"/>
    </location>
</feature>
<feature type="topological domain" description="Cytoplasmic" evidence="1">
    <location>
        <begin position="31"/>
        <end position="284"/>
    </location>
</feature>
<feature type="domain" description="J" evidence="1">
    <location>
        <begin position="218"/>
        <end position="284"/>
    </location>
</feature>
<feature type="region of interest" description="Disordered" evidence="2">
    <location>
        <begin position="190"/>
        <end position="211"/>
    </location>
</feature>
<feature type="compositionally biased region" description="Low complexity" evidence="2">
    <location>
        <begin position="197"/>
        <end position="211"/>
    </location>
</feature>
<accession>Q9KUR8</accession>
<keyword id="KW-0997">Cell inner membrane</keyword>
<keyword id="KW-1003">Cell membrane</keyword>
<keyword id="KW-0143">Chaperone</keyword>
<keyword id="KW-0472">Membrane</keyword>
<keyword id="KW-1185">Reference proteome</keyword>
<keyword id="KW-0812">Transmembrane</keyword>
<keyword id="KW-1133">Transmembrane helix</keyword>
<organism>
    <name type="scientific">Vibrio cholerae serotype O1 (strain ATCC 39315 / El Tor Inaba N16961)</name>
    <dbReference type="NCBI Taxonomy" id="243277"/>
    <lineage>
        <taxon>Bacteria</taxon>
        <taxon>Pseudomonadati</taxon>
        <taxon>Pseudomonadota</taxon>
        <taxon>Gammaproteobacteria</taxon>
        <taxon>Vibrionales</taxon>
        <taxon>Vibrionaceae</taxon>
        <taxon>Vibrio</taxon>
    </lineage>
</organism>
<evidence type="ECO:0000255" key="1">
    <source>
        <dbReference type="HAMAP-Rule" id="MF_01153"/>
    </source>
</evidence>
<evidence type="ECO:0000256" key="2">
    <source>
        <dbReference type="SAM" id="MobiDB-lite"/>
    </source>
</evidence>
<reference key="1">
    <citation type="journal article" date="2000" name="Nature">
        <title>DNA sequence of both chromosomes of the cholera pathogen Vibrio cholerae.</title>
        <authorList>
            <person name="Heidelberg J.F."/>
            <person name="Eisen J.A."/>
            <person name="Nelson W.C."/>
            <person name="Clayton R.A."/>
            <person name="Gwinn M.L."/>
            <person name="Dodson R.J."/>
            <person name="Haft D.H."/>
            <person name="Hickey E.K."/>
            <person name="Peterson J.D."/>
            <person name="Umayam L.A."/>
            <person name="Gill S.R."/>
            <person name="Nelson K.E."/>
            <person name="Read T.D."/>
            <person name="Tettelin H."/>
            <person name="Richardson D.L."/>
            <person name="Ermolaeva M.D."/>
            <person name="Vamathevan J.J."/>
            <person name="Bass S."/>
            <person name="Qin H."/>
            <person name="Dragoi I."/>
            <person name="Sellers P."/>
            <person name="McDonald L.A."/>
            <person name="Utterback T.R."/>
            <person name="Fleischmann R.D."/>
            <person name="Nierman W.C."/>
            <person name="White O."/>
            <person name="Salzberg S.L."/>
            <person name="Smith H.O."/>
            <person name="Colwell R.R."/>
            <person name="Mekalanos J.J."/>
            <person name="Venter J.C."/>
            <person name="Fraser C.M."/>
        </authorList>
    </citation>
    <scope>NUCLEOTIDE SEQUENCE [LARGE SCALE GENOMIC DNA]</scope>
    <source>
        <strain>ATCC 39315 / El Tor Inaba N16961</strain>
    </source>
</reference>
<gene>
    <name evidence="1" type="primary">djlA</name>
    <name type="ordered locus">VC_0447</name>
</gene>
<dbReference type="EMBL" id="AE003852">
    <property type="protein sequence ID" value="AAF93620.1"/>
    <property type="molecule type" value="Genomic_DNA"/>
</dbReference>
<dbReference type="PIR" id="G82319">
    <property type="entry name" value="G82319"/>
</dbReference>
<dbReference type="RefSeq" id="NP_230101.1">
    <property type="nucleotide sequence ID" value="NC_002505.1"/>
</dbReference>
<dbReference type="RefSeq" id="WP_000546924.1">
    <property type="nucleotide sequence ID" value="NZ_LT906614.1"/>
</dbReference>
<dbReference type="SMR" id="Q9KUR8"/>
<dbReference type="STRING" id="243277.VC_0447"/>
<dbReference type="DNASU" id="2615779"/>
<dbReference type="EnsemblBacteria" id="AAF93620">
    <property type="protein sequence ID" value="AAF93620"/>
    <property type="gene ID" value="VC_0447"/>
</dbReference>
<dbReference type="GeneID" id="94014761"/>
<dbReference type="KEGG" id="vch:VC_0447"/>
<dbReference type="PATRIC" id="fig|243277.26.peg.421"/>
<dbReference type="eggNOG" id="COG1076">
    <property type="taxonomic scope" value="Bacteria"/>
</dbReference>
<dbReference type="HOGENOM" id="CLU_066221_1_0_6"/>
<dbReference type="Proteomes" id="UP000000584">
    <property type="component" value="Chromosome 1"/>
</dbReference>
<dbReference type="GO" id="GO:0005886">
    <property type="term" value="C:plasma membrane"/>
    <property type="evidence" value="ECO:0007669"/>
    <property type="project" value="UniProtKB-SubCell"/>
</dbReference>
<dbReference type="GO" id="GO:0051087">
    <property type="term" value="F:protein-folding chaperone binding"/>
    <property type="evidence" value="ECO:0007669"/>
    <property type="project" value="InterPro"/>
</dbReference>
<dbReference type="CDD" id="cd06257">
    <property type="entry name" value="DnaJ"/>
    <property type="match status" value="1"/>
</dbReference>
<dbReference type="CDD" id="cd07316">
    <property type="entry name" value="terB_like_DjlA"/>
    <property type="match status" value="1"/>
</dbReference>
<dbReference type="FunFam" id="1.10.287.110:FF:000011">
    <property type="entry name" value="Co-chaperone protein DjlA"/>
    <property type="match status" value="1"/>
</dbReference>
<dbReference type="Gene3D" id="1.10.287.110">
    <property type="entry name" value="DnaJ domain"/>
    <property type="match status" value="1"/>
</dbReference>
<dbReference type="Gene3D" id="1.10.3680.10">
    <property type="entry name" value="TerB-like"/>
    <property type="match status" value="1"/>
</dbReference>
<dbReference type="HAMAP" id="MF_01153">
    <property type="entry name" value="DjlA"/>
    <property type="match status" value="1"/>
</dbReference>
<dbReference type="InterPro" id="IPR023749">
    <property type="entry name" value="DjlA"/>
</dbReference>
<dbReference type="InterPro" id="IPR050817">
    <property type="entry name" value="DjlA_DnaK_co-chaperone"/>
</dbReference>
<dbReference type="InterPro" id="IPR007791">
    <property type="entry name" value="DjlA_N"/>
</dbReference>
<dbReference type="InterPro" id="IPR001623">
    <property type="entry name" value="DnaJ_domain"/>
</dbReference>
<dbReference type="InterPro" id="IPR036869">
    <property type="entry name" value="J_dom_sf"/>
</dbReference>
<dbReference type="InterPro" id="IPR029024">
    <property type="entry name" value="TerB-like"/>
</dbReference>
<dbReference type="NCBIfam" id="NF006948">
    <property type="entry name" value="PRK09430.1"/>
    <property type="match status" value="1"/>
</dbReference>
<dbReference type="PANTHER" id="PTHR24074">
    <property type="entry name" value="CO-CHAPERONE PROTEIN DJLA"/>
    <property type="match status" value="1"/>
</dbReference>
<dbReference type="Pfam" id="PF00226">
    <property type="entry name" value="DnaJ"/>
    <property type="match status" value="1"/>
</dbReference>
<dbReference type="Pfam" id="PF05099">
    <property type="entry name" value="TerB"/>
    <property type="match status" value="1"/>
</dbReference>
<dbReference type="PRINTS" id="PR00625">
    <property type="entry name" value="JDOMAIN"/>
</dbReference>
<dbReference type="SMART" id="SM00271">
    <property type="entry name" value="DnaJ"/>
    <property type="match status" value="1"/>
</dbReference>
<dbReference type="SUPFAM" id="SSF46565">
    <property type="entry name" value="Chaperone J-domain"/>
    <property type="match status" value="1"/>
</dbReference>
<dbReference type="SUPFAM" id="SSF158682">
    <property type="entry name" value="TerB-like"/>
    <property type="match status" value="1"/>
</dbReference>
<dbReference type="PROSITE" id="PS50076">
    <property type="entry name" value="DNAJ_2"/>
    <property type="match status" value="1"/>
</dbReference>
<comment type="function">
    <text evidence="1">Regulatory DnaK co-chaperone. Direct interaction between DnaK and DjlA is needed for the induction of the wcaABCDE operon, involved in the synthesis of a colanic acid polysaccharide capsule, possibly through activation of the RcsB/RcsC phosphotransfer signaling pathway. The colanic acid capsule may help the bacterium survive conditions outside the host.</text>
</comment>
<comment type="subunit">
    <text evidence="1">Homodimer.</text>
</comment>
<comment type="subcellular location">
    <subcellularLocation>
        <location evidence="1">Cell inner membrane</location>
        <topology evidence="1">Single-pass type III membrane protein</topology>
    </subcellularLocation>
</comment>
<comment type="domain">
    <text evidence="1">The transmembrane domain is a dimerization domain.</text>
</comment>
<proteinExistence type="inferred from homology"/>
<name>DJLA_VIBCH</name>
<sequence>MHIFGKILGAFFGFLFGGPFGAIFGIFLGHQFDKARRLNQAGFQSGTFGAGPSQAERQEEFFKSAFSVMGHVAKAKGQVTKEEIQLATIMMDRMNLTLEQKRAAQDAFRDGKESDFPLEQVLERVKIATGGRFDLLQFFLELQVSSAFADGDVHPSERQVLHRIARGLGFSSEQLERRLRMQEAAFRFQQGGGFGGSQQQSHSGQQWQQPSSRHQLADAYEVLGVSESASAQEVKRAYRKLMNEHHPDKLMAKGLPPEMMNVAKEKSQQIQHAYELIRKEKGIK</sequence>
<protein>
    <recommendedName>
        <fullName evidence="1">Co-chaperone protein DjlA</fullName>
    </recommendedName>
</protein>